<protein>
    <recommendedName>
        <fullName evidence="1">Adenosylcobinamide-GDP ribazoletransferase</fullName>
        <ecNumber evidence="1">2.7.8.26</ecNumber>
    </recommendedName>
    <alternativeName>
        <fullName evidence="1">Cobalamin synthase</fullName>
    </alternativeName>
    <alternativeName>
        <fullName evidence="1">Cobalamin-5'-phosphate synthase</fullName>
    </alternativeName>
</protein>
<sequence length="257" mass="25505">MILTALRGALGFLTRIPVGRDEAAWAAFARSPWTFPVVGYLVGGLVALSLFVPAPAPTVALAFVLAVYAVTGIGHLDGVADIGDAAAVHGDREERRRVLKDSALGVGGTVALALVVLGLATAALGLVEVAATAGDGGPLPPVIGIVVAAEVGAKAATATLVCVGDAPHEGLGSALTGESSPGATLSVFALAAPAALLTWPQVLPGLAALLVALATAALVARWSRRRLGGVSGDVLGATTELARVAALHAGVIAWTRF</sequence>
<name>COBS_HALLT</name>
<gene>
    <name evidence="1" type="primary">cobS</name>
    <name type="ordered locus">Hlac_0233</name>
</gene>
<feature type="chain" id="PRO_1000148025" description="Adenosylcobinamide-GDP ribazoletransferase">
    <location>
        <begin position="1"/>
        <end position="257"/>
    </location>
</feature>
<feature type="transmembrane region" description="Helical" evidence="1">
    <location>
        <begin position="28"/>
        <end position="48"/>
    </location>
</feature>
<feature type="transmembrane region" description="Helical" evidence="1">
    <location>
        <begin position="50"/>
        <end position="70"/>
    </location>
</feature>
<feature type="transmembrane region" description="Helical" evidence="1">
    <location>
        <begin position="110"/>
        <end position="130"/>
    </location>
</feature>
<feature type="transmembrane region" description="Helical" evidence="1">
    <location>
        <begin position="199"/>
        <end position="219"/>
    </location>
</feature>
<accession>B9LRL5</accession>
<proteinExistence type="inferred from homology"/>
<keyword id="KW-1003">Cell membrane</keyword>
<keyword id="KW-0169">Cobalamin biosynthesis</keyword>
<keyword id="KW-0460">Magnesium</keyword>
<keyword id="KW-0472">Membrane</keyword>
<keyword id="KW-1185">Reference proteome</keyword>
<keyword id="KW-0808">Transferase</keyword>
<keyword id="KW-0812">Transmembrane</keyword>
<keyword id="KW-1133">Transmembrane helix</keyword>
<organism>
    <name type="scientific">Halorubrum lacusprofundi (strain ATCC 49239 / DSM 5036 / JCM 8891 / ACAM 34)</name>
    <dbReference type="NCBI Taxonomy" id="416348"/>
    <lineage>
        <taxon>Archaea</taxon>
        <taxon>Methanobacteriati</taxon>
        <taxon>Methanobacteriota</taxon>
        <taxon>Stenosarchaea group</taxon>
        <taxon>Halobacteria</taxon>
        <taxon>Halobacteriales</taxon>
        <taxon>Haloferacaceae</taxon>
        <taxon>Halorubrum</taxon>
    </lineage>
</organism>
<reference key="1">
    <citation type="journal article" date="2016" name="Stand. Genomic Sci.">
        <title>Complete genome sequence of the Antarctic Halorubrum lacusprofundi type strain ACAM 34.</title>
        <authorList>
            <person name="Anderson I.J."/>
            <person name="DasSarma P."/>
            <person name="Lucas S."/>
            <person name="Copeland A."/>
            <person name="Lapidus A."/>
            <person name="Del Rio T.G."/>
            <person name="Tice H."/>
            <person name="Dalin E."/>
            <person name="Bruce D.C."/>
            <person name="Goodwin L."/>
            <person name="Pitluck S."/>
            <person name="Sims D."/>
            <person name="Brettin T.S."/>
            <person name="Detter J.C."/>
            <person name="Han C.S."/>
            <person name="Larimer F."/>
            <person name="Hauser L."/>
            <person name="Land M."/>
            <person name="Ivanova N."/>
            <person name="Richardson P."/>
            <person name="Cavicchioli R."/>
            <person name="DasSarma S."/>
            <person name="Woese C.R."/>
            <person name="Kyrpides N.C."/>
        </authorList>
    </citation>
    <scope>NUCLEOTIDE SEQUENCE [LARGE SCALE GENOMIC DNA]</scope>
    <source>
        <strain>ATCC 49239 / DSM 5036 / JCM 8891 / ACAM 34</strain>
    </source>
</reference>
<comment type="function">
    <text evidence="1">Joins adenosylcobinamide-GDP and alpha-ribazole to generate adenosylcobalamin (Ado-cobalamin). Also synthesizes adenosylcobalamin 5'-phosphate from adenosylcobinamide-GDP and alpha-ribazole 5'-phosphate.</text>
</comment>
<comment type="catalytic activity">
    <reaction evidence="1">
        <text>alpha-ribazole + adenosylcob(III)inamide-GDP = adenosylcob(III)alamin + GMP + H(+)</text>
        <dbReference type="Rhea" id="RHEA:16049"/>
        <dbReference type="ChEBI" id="CHEBI:10329"/>
        <dbReference type="ChEBI" id="CHEBI:15378"/>
        <dbReference type="ChEBI" id="CHEBI:18408"/>
        <dbReference type="ChEBI" id="CHEBI:58115"/>
        <dbReference type="ChEBI" id="CHEBI:60487"/>
        <dbReference type="EC" id="2.7.8.26"/>
    </reaction>
</comment>
<comment type="catalytic activity">
    <reaction evidence="1">
        <text>alpha-ribazole 5'-phosphate + adenosylcob(III)inamide-GDP = adenosylcob(III)alamin 5'-phosphate + GMP + H(+)</text>
        <dbReference type="Rhea" id="RHEA:23560"/>
        <dbReference type="ChEBI" id="CHEBI:15378"/>
        <dbReference type="ChEBI" id="CHEBI:57918"/>
        <dbReference type="ChEBI" id="CHEBI:58115"/>
        <dbReference type="ChEBI" id="CHEBI:60487"/>
        <dbReference type="ChEBI" id="CHEBI:60493"/>
        <dbReference type="EC" id="2.7.8.26"/>
    </reaction>
</comment>
<comment type="cofactor">
    <cofactor evidence="1">
        <name>Mg(2+)</name>
        <dbReference type="ChEBI" id="CHEBI:18420"/>
    </cofactor>
</comment>
<comment type="pathway">
    <text evidence="1">Cofactor biosynthesis; adenosylcobalamin biosynthesis; adenosylcobalamin from cob(II)yrinate a,c-diamide: step 7/7.</text>
</comment>
<comment type="subcellular location">
    <subcellularLocation>
        <location evidence="1">Cell membrane</location>
        <topology evidence="1">Multi-pass membrane protein</topology>
    </subcellularLocation>
</comment>
<comment type="similarity">
    <text evidence="1">Belongs to the CobS family.</text>
</comment>
<evidence type="ECO:0000255" key="1">
    <source>
        <dbReference type="HAMAP-Rule" id="MF_00719"/>
    </source>
</evidence>
<dbReference type="EC" id="2.7.8.26" evidence="1"/>
<dbReference type="EMBL" id="CP001365">
    <property type="protein sequence ID" value="ACM55838.1"/>
    <property type="molecule type" value="Genomic_DNA"/>
</dbReference>
<dbReference type="RefSeq" id="WP_012659479.1">
    <property type="nucleotide sequence ID" value="NC_012029.1"/>
</dbReference>
<dbReference type="GeneID" id="7402162"/>
<dbReference type="KEGG" id="hla:Hlac_0233"/>
<dbReference type="eggNOG" id="arCOG04338">
    <property type="taxonomic scope" value="Archaea"/>
</dbReference>
<dbReference type="HOGENOM" id="CLU_057426_2_0_2"/>
<dbReference type="UniPathway" id="UPA00148">
    <property type="reaction ID" value="UER00238"/>
</dbReference>
<dbReference type="Proteomes" id="UP000000740">
    <property type="component" value="Chromosome 1"/>
</dbReference>
<dbReference type="GO" id="GO:0005886">
    <property type="term" value="C:plasma membrane"/>
    <property type="evidence" value="ECO:0007669"/>
    <property type="project" value="UniProtKB-SubCell"/>
</dbReference>
<dbReference type="GO" id="GO:0051073">
    <property type="term" value="F:adenosylcobinamide-GDP ribazoletransferase activity"/>
    <property type="evidence" value="ECO:0007669"/>
    <property type="project" value="UniProtKB-UniRule"/>
</dbReference>
<dbReference type="GO" id="GO:0008818">
    <property type="term" value="F:cobalamin 5'-phosphate synthase activity"/>
    <property type="evidence" value="ECO:0007669"/>
    <property type="project" value="UniProtKB-UniRule"/>
</dbReference>
<dbReference type="GO" id="GO:0009236">
    <property type="term" value="P:cobalamin biosynthetic process"/>
    <property type="evidence" value="ECO:0007669"/>
    <property type="project" value="UniProtKB-UniRule"/>
</dbReference>
<dbReference type="HAMAP" id="MF_00719">
    <property type="entry name" value="CobS"/>
    <property type="match status" value="1"/>
</dbReference>
<dbReference type="InterPro" id="IPR003805">
    <property type="entry name" value="CobS"/>
</dbReference>
<dbReference type="NCBIfam" id="TIGR00317">
    <property type="entry name" value="cobS"/>
    <property type="match status" value="1"/>
</dbReference>
<dbReference type="PANTHER" id="PTHR34148">
    <property type="entry name" value="ADENOSYLCOBINAMIDE-GDP RIBAZOLETRANSFERASE"/>
    <property type="match status" value="1"/>
</dbReference>
<dbReference type="PANTHER" id="PTHR34148:SF1">
    <property type="entry name" value="ADENOSYLCOBINAMIDE-GDP RIBAZOLETRANSFERASE"/>
    <property type="match status" value="1"/>
</dbReference>
<dbReference type="Pfam" id="PF02654">
    <property type="entry name" value="CobS"/>
    <property type="match status" value="1"/>
</dbReference>